<accession>Q10474</accession>
<comment type="function">
    <text evidence="1">Catalyzes the transfer of a 4'-phosphopantetheine moiety from coenzyme A to a serine residue of acceptor proteins, such as alpha-aminoadipate reductase. Necessary for alpha-aminoadipate reductase activity.</text>
</comment>
<comment type="catalytic activity">
    <reaction evidence="4">
        <text>apo-[ACP] + CoA = holo-[ACP] + adenosine 3',5'-bisphosphate + H(+)</text>
        <dbReference type="Rhea" id="RHEA:12068"/>
        <dbReference type="Rhea" id="RHEA-COMP:9685"/>
        <dbReference type="Rhea" id="RHEA-COMP:9690"/>
        <dbReference type="ChEBI" id="CHEBI:15378"/>
        <dbReference type="ChEBI" id="CHEBI:29999"/>
        <dbReference type="ChEBI" id="CHEBI:57287"/>
        <dbReference type="ChEBI" id="CHEBI:58343"/>
        <dbReference type="ChEBI" id="CHEBI:64479"/>
        <dbReference type="EC" id="2.7.8.7"/>
    </reaction>
</comment>
<comment type="subcellular location">
    <subcellularLocation>
        <location evidence="2">Cytoplasm</location>
    </subcellularLocation>
    <subcellularLocation>
        <location evidence="2">Nucleus</location>
    </subcellularLocation>
</comment>
<comment type="similarity">
    <text evidence="3">Belongs to the P-Pant transferase superfamily. AcpS family.</text>
</comment>
<proteinExistence type="evidence at protein level"/>
<dbReference type="EC" id="2.7.8.7" evidence="4"/>
<dbReference type="EMBL" id="CU329670">
    <property type="protein sequence ID" value="CAA97348.1"/>
    <property type="molecule type" value="Genomic_DNA"/>
</dbReference>
<dbReference type="PIR" id="T11582">
    <property type="entry name" value="T11582"/>
</dbReference>
<dbReference type="RefSeq" id="NP_594603.1">
    <property type="nucleotide sequence ID" value="NM_001020031.2"/>
</dbReference>
<dbReference type="SMR" id="Q10474"/>
<dbReference type="BioGRID" id="278594">
    <property type="interactions" value="2"/>
</dbReference>
<dbReference type="FunCoup" id="Q10474">
    <property type="interactions" value="447"/>
</dbReference>
<dbReference type="STRING" id="284812.Q10474"/>
<dbReference type="PaxDb" id="4896-SPAC17C9.02c.1"/>
<dbReference type="EnsemblFungi" id="SPAC17C9.02c.1">
    <property type="protein sequence ID" value="SPAC17C9.02c.1:pep"/>
    <property type="gene ID" value="SPAC17C9.02c"/>
</dbReference>
<dbReference type="GeneID" id="2542118"/>
<dbReference type="KEGG" id="spo:2542118"/>
<dbReference type="PomBase" id="SPAC17C9.02c">
    <property type="gene designation" value="lys7"/>
</dbReference>
<dbReference type="VEuPathDB" id="FungiDB:SPAC17C9.02c"/>
<dbReference type="eggNOG" id="KOG0945">
    <property type="taxonomic scope" value="Eukaryota"/>
</dbReference>
<dbReference type="HOGENOM" id="CLU_1023625_0_0_1"/>
<dbReference type="InParanoid" id="Q10474"/>
<dbReference type="OMA" id="DFNVSHY"/>
<dbReference type="PhylomeDB" id="Q10474"/>
<dbReference type="PRO" id="PR:Q10474"/>
<dbReference type="Proteomes" id="UP000002485">
    <property type="component" value="Chromosome I"/>
</dbReference>
<dbReference type="GO" id="GO:0005829">
    <property type="term" value="C:cytosol"/>
    <property type="evidence" value="ECO:0007005"/>
    <property type="project" value="PomBase"/>
</dbReference>
<dbReference type="GO" id="GO:0005634">
    <property type="term" value="C:nucleus"/>
    <property type="evidence" value="ECO:0007005"/>
    <property type="project" value="PomBase"/>
</dbReference>
<dbReference type="GO" id="GO:0008897">
    <property type="term" value="F:holo-[acyl-carrier-protein] synthase activity"/>
    <property type="evidence" value="ECO:0000314"/>
    <property type="project" value="PomBase"/>
</dbReference>
<dbReference type="GO" id="GO:0000287">
    <property type="term" value="F:magnesium ion binding"/>
    <property type="evidence" value="ECO:0007669"/>
    <property type="project" value="InterPro"/>
</dbReference>
<dbReference type="GO" id="GO:0009085">
    <property type="term" value="P:lysine biosynthetic process"/>
    <property type="evidence" value="ECO:0000314"/>
    <property type="project" value="PomBase"/>
</dbReference>
<dbReference type="GO" id="GO:0019878">
    <property type="term" value="P:lysine biosynthetic process via aminoadipic acid"/>
    <property type="evidence" value="ECO:0000315"/>
    <property type="project" value="PomBase"/>
</dbReference>
<dbReference type="Gene3D" id="3.90.470.20">
    <property type="entry name" value="4'-phosphopantetheinyl transferase domain"/>
    <property type="match status" value="2"/>
</dbReference>
<dbReference type="InterPro" id="IPR008278">
    <property type="entry name" value="4-PPantetheinyl_Trfase_dom"/>
</dbReference>
<dbReference type="InterPro" id="IPR037143">
    <property type="entry name" value="4-PPantetheinyl_Trfase_dom_sf"/>
</dbReference>
<dbReference type="InterPro" id="IPR055066">
    <property type="entry name" value="AASDHPPT_N"/>
</dbReference>
<dbReference type="InterPro" id="IPR050559">
    <property type="entry name" value="P-Pant_transferase_sf"/>
</dbReference>
<dbReference type="PANTHER" id="PTHR12215:SF10">
    <property type="entry name" value="L-AMINOADIPATE-SEMIALDEHYDE DEHYDROGENASE-PHOSPHOPANTETHEINYL TRANSFERASE"/>
    <property type="match status" value="1"/>
</dbReference>
<dbReference type="PANTHER" id="PTHR12215">
    <property type="entry name" value="PHOSPHOPANTETHEINE TRANSFERASE"/>
    <property type="match status" value="1"/>
</dbReference>
<dbReference type="Pfam" id="PF22624">
    <property type="entry name" value="AASDHPPT_N"/>
    <property type="match status" value="1"/>
</dbReference>
<dbReference type="Pfam" id="PF01648">
    <property type="entry name" value="ACPS"/>
    <property type="match status" value="1"/>
</dbReference>
<dbReference type="SUPFAM" id="SSF56214">
    <property type="entry name" value="4'-phosphopantetheinyl transferase"/>
    <property type="match status" value="2"/>
</dbReference>
<sequence length="258" mass="29320">MKQKVYRLLIDTQEAWPFERTRIPSFKKLSDSERQQIERYYFDMDAKMALASILIKRHLVSTALECSPNEVQISVTKAGRPYCQSAHCPPIIFDFNVSHYGGIVIVVGAWLPSDPSGMRPINIGVDIVECKPLAFEASWMEDFMSVFTPCEWKLIKSSISSIDVFFLLWTCKEAILKALGIGLSGNPLDIVVTFHKLNELLNSEEVSLRRAATAVYSGYSWDLEIHKLILHSSTFYVSVAFPQDCVIMDLNWETLNDL</sequence>
<organism>
    <name type="scientific">Schizosaccharomyces pombe (strain 972 / ATCC 24843)</name>
    <name type="common">Fission yeast</name>
    <dbReference type="NCBI Taxonomy" id="284812"/>
    <lineage>
        <taxon>Eukaryota</taxon>
        <taxon>Fungi</taxon>
        <taxon>Dikarya</taxon>
        <taxon>Ascomycota</taxon>
        <taxon>Taphrinomycotina</taxon>
        <taxon>Schizosaccharomycetes</taxon>
        <taxon>Schizosaccharomycetales</taxon>
        <taxon>Schizosaccharomycetaceae</taxon>
        <taxon>Schizosaccharomyces</taxon>
    </lineage>
</organism>
<protein>
    <recommendedName>
        <fullName>L-aminoadipate-semialdehyde dehydrogenase-phosphopantetheinyl transferase</fullName>
        <shortName>AASD-PPT</shortName>
        <ecNumber evidence="4">2.7.8.7</ecNumber>
    </recommendedName>
</protein>
<gene>
    <name type="primary">lys7</name>
    <name type="ORF">SPAC17C9.02c</name>
</gene>
<feature type="chain" id="PRO_0000116616" description="L-aminoadipate-semialdehyde dehydrogenase-phosphopantetheinyl transferase">
    <location>
        <begin position="1"/>
        <end position="258"/>
    </location>
</feature>
<feature type="mutagenesis site" description="No activity." evidence="1">
    <original>GRP</original>
    <variation>AKA</variation>
    <location>
        <begin position="79"/>
        <end position="81"/>
    </location>
</feature>
<feature type="mutagenesis site" description="No activity." evidence="1">
    <original>FDFN</original>
    <variation>WEWI</variation>
    <location>
        <begin position="93"/>
        <end position="96"/>
    </location>
</feature>
<feature type="mutagenesis site" description="No activity." evidence="1">
    <original>GVD</original>
    <variation>AIE</variation>
    <location>
        <begin position="124"/>
        <end position="126"/>
    </location>
</feature>
<feature type="mutagenesis site" description="No activity." evidence="1">
    <original>KE</original>
    <variation>RD</variation>
    <location>
        <begin position="172"/>
        <end position="173"/>
    </location>
</feature>
<feature type="mutagenesis site" description="No activity." evidence="1">
    <original>K</original>
    <variation>R</variation>
    <location>
        <position position="177"/>
    </location>
</feature>
<keyword id="KW-0028">Amino-acid biosynthesis</keyword>
<keyword id="KW-0963">Cytoplasm</keyword>
<keyword id="KW-0457">Lysine biosynthesis</keyword>
<keyword id="KW-0539">Nucleus</keyword>
<keyword id="KW-1185">Reference proteome</keyword>
<keyword id="KW-0808">Transferase</keyword>
<name>LYS5_SCHPO</name>
<reference key="1">
    <citation type="journal article" date="2002" name="Nature">
        <title>The genome sequence of Schizosaccharomyces pombe.</title>
        <authorList>
            <person name="Wood V."/>
            <person name="Gwilliam R."/>
            <person name="Rajandream M.A."/>
            <person name="Lyne M.H."/>
            <person name="Lyne R."/>
            <person name="Stewart A."/>
            <person name="Sgouros J.G."/>
            <person name="Peat N."/>
            <person name="Hayles J."/>
            <person name="Baker S.G."/>
            <person name="Basham D."/>
            <person name="Bowman S."/>
            <person name="Brooks K."/>
            <person name="Brown D."/>
            <person name="Brown S."/>
            <person name="Chillingworth T."/>
            <person name="Churcher C.M."/>
            <person name="Collins M."/>
            <person name="Connor R."/>
            <person name="Cronin A."/>
            <person name="Davis P."/>
            <person name="Feltwell T."/>
            <person name="Fraser A."/>
            <person name="Gentles S."/>
            <person name="Goble A."/>
            <person name="Hamlin N."/>
            <person name="Harris D.E."/>
            <person name="Hidalgo J."/>
            <person name="Hodgson G."/>
            <person name="Holroyd S."/>
            <person name="Hornsby T."/>
            <person name="Howarth S."/>
            <person name="Huckle E.J."/>
            <person name="Hunt S."/>
            <person name="Jagels K."/>
            <person name="James K.D."/>
            <person name="Jones L."/>
            <person name="Jones M."/>
            <person name="Leather S."/>
            <person name="McDonald S."/>
            <person name="McLean J."/>
            <person name="Mooney P."/>
            <person name="Moule S."/>
            <person name="Mungall K.L."/>
            <person name="Murphy L.D."/>
            <person name="Niblett D."/>
            <person name="Odell C."/>
            <person name="Oliver K."/>
            <person name="O'Neil S."/>
            <person name="Pearson D."/>
            <person name="Quail M.A."/>
            <person name="Rabbinowitsch E."/>
            <person name="Rutherford K.M."/>
            <person name="Rutter S."/>
            <person name="Saunders D."/>
            <person name="Seeger K."/>
            <person name="Sharp S."/>
            <person name="Skelton J."/>
            <person name="Simmonds M.N."/>
            <person name="Squares R."/>
            <person name="Squares S."/>
            <person name="Stevens K."/>
            <person name="Taylor K."/>
            <person name="Taylor R.G."/>
            <person name="Tivey A."/>
            <person name="Walsh S.V."/>
            <person name="Warren T."/>
            <person name="Whitehead S."/>
            <person name="Woodward J.R."/>
            <person name="Volckaert G."/>
            <person name="Aert R."/>
            <person name="Robben J."/>
            <person name="Grymonprez B."/>
            <person name="Weltjens I."/>
            <person name="Vanstreels E."/>
            <person name="Rieger M."/>
            <person name="Schaefer M."/>
            <person name="Mueller-Auer S."/>
            <person name="Gabel C."/>
            <person name="Fuchs M."/>
            <person name="Duesterhoeft A."/>
            <person name="Fritzc C."/>
            <person name="Holzer E."/>
            <person name="Moestl D."/>
            <person name="Hilbert H."/>
            <person name="Borzym K."/>
            <person name="Langer I."/>
            <person name="Beck A."/>
            <person name="Lehrach H."/>
            <person name="Reinhardt R."/>
            <person name="Pohl T.M."/>
            <person name="Eger P."/>
            <person name="Zimmermann W."/>
            <person name="Wedler H."/>
            <person name="Wambutt R."/>
            <person name="Purnelle B."/>
            <person name="Goffeau A."/>
            <person name="Cadieu E."/>
            <person name="Dreano S."/>
            <person name="Gloux S."/>
            <person name="Lelaure V."/>
            <person name="Mottier S."/>
            <person name="Galibert F."/>
            <person name="Aves S.J."/>
            <person name="Xiang Z."/>
            <person name="Hunt C."/>
            <person name="Moore K."/>
            <person name="Hurst S.M."/>
            <person name="Lucas M."/>
            <person name="Rochet M."/>
            <person name="Gaillardin C."/>
            <person name="Tallada V.A."/>
            <person name="Garzon A."/>
            <person name="Thode G."/>
            <person name="Daga R.R."/>
            <person name="Cruzado L."/>
            <person name="Jimenez J."/>
            <person name="Sanchez M."/>
            <person name="del Rey F."/>
            <person name="Benito J."/>
            <person name="Dominguez A."/>
            <person name="Revuelta J.L."/>
            <person name="Moreno S."/>
            <person name="Armstrong J."/>
            <person name="Forsburg S.L."/>
            <person name="Cerutti L."/>
            <person name="Lowe T."/>
            <person name="McCombie W.R."/>
            <person name="Paulsen I."/>
            <person name="Potashkin J."/>
            <person name="Shpakovski G.V."/>
            <person name="Ussery D."/>
            <person name="Barrell B.G."/>
            <person name="Nurse P."/>
        </authorList>
    </citation>
    <scope>NUCLEOTIDE SEQUENCE [LARGE SCALE GENOMIC DNA]</scope>
    <source>
        <strain>972 / ATCC 24843</strain>
    </source>
</reference>
<reference key="2">
    <citation type="journal article" date="2004" name="Yeast">
        <title>Posttranslational activation, site-directed mutation and phylogenetic analyses of the lysine biosynthesis enzymes alpha-aminoadipate reductase Lys1p (AAR) and the phosphopantetheinyl transferase Lys7p (PPTase) from Schizosaccharomyces pombe.</title>
        <authorList>
            <person name="Guo S."/>
            <person name="Bhattacharjee J.K."/>
        </authorList>
    </citation>
    <scope>FUNCTION</scope>
    <scope>CATALYTIC ACTIVITY</scope>
    <scope>MUTAGENESIS OF 79-GLY--PRO-81; 93-PHE--ASN-96; 124-GLY--ASP-126; 172-LYS-GLU-173 AND LYS-177</scope>
    <source>
        <strain>972 / ATCC 24843</strain>
    </source>
</reference>
<reference key="3">
    <citation type="journal article" date="2006" name="Nat. Biotechnol.">
        <title>ORFeome cloning and global analysis of protein localization in the fission yeast Schizosaccharomyces pombe.</title>
        <authorList>
            <person name="Matsuyama A."/>
            <person name="Arai R."/>
            <person name="Yashiroda Y."/>
            <person name="Shirai A."/>
            <person name="Kamata A."/>
            <person name="Sekido S."/>
            <person name="Kobayashi Y."/>
            <person name="Hashimoto A."/>
            <person name="Hamamoto M."/>
            <person name="Hiraoka Y."/>
            <person name="Horinouchi S."/>
            <person name="Yoshida M."/>
        </authorList>
    </citation>
    <scope>SUBCELLULAR LOCATION [LARGE SCALE ANALYSIS]</scope>
</reference>
<evidence type="ECO:0000269" key="1">
    <source>
    </source>
</evidence>
<evidence type="ECO:0000269" key="2">
    <source>
    </source>
</evidence>
<evidence type="ECO:0000305" key="3"/>
<evidence type="ECO:0000305" key="4">
    <source>
    </source>
</evidence>